<dbReference type="EMBL" id="CP000753">
    <property type="protein sequence ID" value="ABS07855.1"/>
    <property type="molecule type" value="Genomic_DNA"/>
</dbReference>
<dbReference type="RefSeq" id="WP_006081226.1">
    <property type="nucleotide sequence ID" value="NC_009665.1"/>
</dbReference>
<dbReference type="SMR" id="A6WM16"/>
<dbReference type="GeneID" id="67443097"/>
<dbReference type="KEGG" id="sbm:Shew185_1712"/>
<dbReference type="HOGENOM" id="CLU_129084_2_1_6"/>
<dbReference type="GO" id="GO:0015934">
    <property type="term" value="C:large ribosomal subunit"/>
    <property type="evidence" value="ECO:0007669"/>
    <property type="project" value="InterPro"/>
</dbReference>
<dbReference type="GO" id="GO:0003735">
    <property type="term" value="F:structural constituent of ribosome"/>
    <property type="evidence" value="ECO:0007669"/>
    <property type="project" value="InterPro"/>
</dbReference>
<dbReference type="GO" id="GO:0006412">
    <property type="term" value="P:translation"/>
    <property type="evidence" value="ECO:0007669"/>
    <property type="project" value="UniProtKB-UniRule"/>
</dbReference>
<dbReference type="HAMAP" id="MF_00340">
    <property type="entry name" value="Ribosomal_bL32"/>
    <property type="match status" value="1"/>
</dbReference>
<dbReference type="InterPro" id="IPR002677">
    <property type="entry name" value="Ribosomal_bL32"/>
</dbReference>
<dbReference type="InterPro" id="IPR044957">
    <property type="entry name" value="Ribosomal_bL32_bact"/>
</dbReference>
<dbReference type="InterPro" id="IPR011332">
    <property type="entry name" value="Ribosomal_zn-bd"/>
</dbReference>
<dbReference type="NCBIfam" id="TIGR01031">
    <property type="entry name" value="rpmF_bact"/>
    <property type="match status" value="1"/>
</dbReference>
<dbReference type="PANTHER" id="PTHR35534">
    <property type="entry name" value="50S RIBOSOMAL PROTEIN L32"/>
    <property type="match status" value="1"/>
</dbReference>
<dbReference type="PANTHER" id="PTHR35534:SF1">
    <property type="entry name" value="LARGE RIBOSOMAL SUBUNIT PROTEIN BL32"/>
    <property type="match status" value="1"/>
</dbReference>
<dbReference type="Pfam" id="PF01783">
    <property type="entry name" value="Ribosomal_L32p"/>
    <property type="match status" value="1"/>
</dbReference>
<dbReference type="SUPFAM" id="SSF57829">
    <property type="entry name" value="Zn-binding ribosomal proteins"/>
    <property type="match status" value="1"/>
</dbReference>
<keyword id="KW-0687">Ribonucleoprotein</keyword>
<keyword id="KW-0689">Ribosomal protein</keyword>
<evidence type="ECO:0000255" key="1">
    <source>
        <dbReference type="HAMAP-Rule" id="MF_00340"/>
    </source>
</evidence>
<evidence type="ECO:0000256" key="2">
    <source>
        <dbReference type="SAM" id="MobiDB-lite"/>
    </source>
</evidence>
<evidence type="ECO:0000305" key="3"/>
<accession>A6WM16</accession>
<organism>
    <name type="scientific">Shewanella baltica (strain OS185)</name>
    <dbReference type="NCBI Taxonomy" id="402882"/>
    <lineage>
        <taxon>Bacteria</taxon>
        <taxon>Pseudomonadati</taxon>
        <taxon>Pseudomonadota</taxon>
        <taxon>Gammaproteobacteria</taxon>
        <taxon>Alteromonadales</taxon>
        <taxon>Shewanellaceae</taxon>
        <taxon>Shewanella</taxon>
    </lineage>
</organism>
<sequence length="56" mass="6299">MAVQQNKKSRSKRGMRRSHDALSTAQLSVDATSGEIHMRHNVTADGFYRGKKVINK</sequence>
<protein>
    <recommendedName>
        <fullName evidence="1">Large ribosomal subunit protein bL32</fullName>
    </recommendedName>
    <alternativeName>
        <fullName evidence="3">50S ribosomal protein L32</fullName>
    </alternativeName>
</protein>
<comment type="similarity">
    <text evidence="1">Belongs to the bacterial ribosomal protein bL32 family.</text>
</comment>
<feature type="chain" id="PRO_1000005078" description="Large ribosomal subunit protein bL32">
    <location>
        <begin position="1"/>
        <end position="56"/>
    </location>
</feature>
<feature type="region of interest" description="Disordered" evidence="2">
    <location>
        <begin position="1"/>
        <end position="26"/>
    </location>
</feature>
<feature type="compositionally biased region" description="Basic residues" evidence="2">
    <location>
        <begin position="7"/>
        <end position="16"/>
    </location>
</feature>
<reference key="1">
    <citation type="submission" date="2007-07" db="EMBL/GenBank/DDBJ databases">
        <title>Complete sequence of chromosome of Shewanella baltica OS185.</title>
        <authorList>
            <consortium name="US DOE Joint Genome Institute"/>
            <person name="Copeland A."/>
            <person name="Lucas S."/>
            <person name="Lapidus A."/>
            <person name="Barry K."/>
            <person name="Glavina del Rio T."/>
            <person name="Dalin E."/>
            <person name="Tice H."/>
            <person name="Pitluck S."/>
            <person name="Sims D."/>
            <person name="Brettin T."/>
            <person name="Bruce D."/>
            <person name="Detter J.C."/>
            <person name="Han C."/>
            <person name="Schmutz J."/>
            <person name="Larimer F."/>
            <person name="Land M."/>
            <person name="Hauser L."/>
            <person name="Kyrpides N."/>
            <person name="Mikhailova N."/>
            <person name="Brettar I."/>
            <person name="Rodrigues J."/>
            <person name="Konstantinidis K."/>
            <person name="Tiedje J."/>
            <person name="Richardson P."/>
        </authorList>
    </citation>
    <scope>NUCLEOTIDE SEQUENCE [LARGE SCALE GENOMIC DNA]</scope>
    <source>
        <strain>OS185</strain>
    </source>
</reference>
<name>RL32_SHEB8</name>
<proteinExistence type="inferred from homology"/>
<gene>
    <name evidence="1" type="primary">rpmF</name>
    <name type="ordered locus">Shew185_1712</name>
</gene>